<feature type="chain" id="PRO_1000046784" description="UPF0306 protein YhbP">
    <location>
        <begin position="1"/>
        <end position="147"/>
    </location>
</feature>
<protein>
    <recommendedName>
        <fullName evidence="1">UPF0306 protein YhbP</fullName>
    </recommendedName>
</protein>
<organism>
    <name type="scientific">Shigella flexneri serotype 5b (strain 8401)</name>
    <dbReference type="NCBI Taxonomy" id="373384"/>
    <lineage>
        <taxon>Bacteria</taxon>
        <taxon>Pseudomonadati</taxon>
        <taxon>Pseudomonadota</taxon>
        <taxon>Gammaproteobacteria</taxon>
        <taxon>Enterobacterales</taxon>
        <taxon>Enterobacteriaceae</taxon>
        <taxon>Shigella</taxon>
    </lineage>
</organism>
<proteinExistence type="inferred from homology"/>
<sequence>METLIAISRWLAKQHVVTWCVQQEGELWCANAFYLFDAQKVAFYILTEEKTRHAQMSGPQAAVAGTVNGQPKTVALIRGVQFKGEIRRLEGEESDLARKAYNRRFPVARMLSAPVWEIRLDEIKFTDNTLGFGKKMIWLRDSGTEQA</sequence>
<evidence type="ECO:0000255" key="1">
    <source>
        <dbReference type="HAMAP-Rule" id="MF_00764"/>
    </source>
</evidence>
<reference key="1">
    <citation type="journal article" date="2006" name="BMC Genomics">
        <title>Complete genome sequence of Shigella flexneri 5b and comparison with Shigella flexneri 2a.</title>
        <authorList>
            <person name="Nie H."/>
            <person name="Yang F."/>
            <person name="Zhang X."/>
            <person name="Yang J."/>
            <person name="Chen L."/>
            <person name="Wang J."/>
            <person name="Xiong Z."/>
            <person name="Peng J."/>
            <person name="Sun L."/>
            <person name="Dong J."/>
            <person name="Xue Y."/>
            <person name="Xu X."/>
            <person name="Chen S."/>
            <person name="Yao Z."/>
            <person name="Shen Y."/>
            <person name="Jin Q."/>
        </authorList>
    </citation>
    <scope>NUCLEOTIDE SEQUENCE [LARGE SCALE GENOMIC DNA]</scope>
    <source>
        <strain>8401</strain>
    </source>
</reference>
<comment type="similarity">
    <text evidence="1">Belongs to the UPF0306 family.</text>
</comment>
<accession>Q0T0C7</accession>
<gene>
    <name evidence="1" type="primary">yhbP</name>
    <name type="ordered locus">SFV_3184</name>
</gene>
<dbReference type="EMBL" id="CP000266">
    <property type="protein sequence ID" value="ABF05238.1"/>
    <property type="molecule type" value="Genomic_DNA"/>
</dbReference>
<dbReference type="RefSeq" id="WP_000449030.1">
    <property type="nucleotide sequence ID" value="NC_008258.1"/>
</dbReference>
<dbReference type="SMR" id="Q0T0C7"/>
<dbReference type="KEGG" id="sfv:SFV_3184"/>
<dbReference type="HOGENOM" id="CLU_105087_3_0_6"/>
<dbReference type="Proteomes" id="UP000000659">
    <property type="component" value="Chromosome"/>
</dbReference>
<dbReference type="FunFam" id="2.30.110.10:FF:000003">
    <property type="entry name" value="UPF0306 protein YhbP"/>
    <property type="match status" value="1"/>
</dbReference>
<dbReference type="Gene3D" id="2.30.110.10">
    <property type="entry name" value="Electron Transport, Fmn-binding Protein, Chain A"/>
    <property type="match status" value="1"/>
</dbReference>
<dbReference type="HAMAP" id="MF_00764">
    <property type="entry name" value="UPF0306"/>
    <property type="match status" value="1"/>
</dbReference>
<dbReference type="InterPro" id="IPR012349">
    <property type="entry name" value="Split_barrel_FMN-bd"/>
</dbReference>
<dbReference type="InterPro" id="IPR011194">
    <property type="entry name" value="UPF0306"/>
</dbReference>
<dbReference type="NCBIfam" id="NF002900">
    <property type="entry name" value="PRK03467.1"/>
    <property type="match status" value="1"/>
</dbReference>
<dbReference type="PIRSF" id="PIRSF009554">
    <property type="entry name" value="UCP009554"/>
    <property type="match status" value="1"/>
</dbReference>
<dbReference type="SUPFAM" id="SSF50475">
    <property type="entry name" value="FMN-binding split barrel"/>
    <property type="match status" value="1"/>
</dbReference>
<name>YHBP_SHIF8</name>